<reference key="1">
    <citation type="journal article" date="1995" name="Gene">
        <title>Structure of the ubiquitin-encoding genes of Cryptococcus neoformans.</title>
        <authorList>
            <person name="Spitzer E.D."/>
            <person name="Spitzer S.G."/>
        </authorList>
    </citation>
    <scope>NUCLEOTIDE SEQUENCE [GENOMIC DNA]</scope>
    <source>
        <strain>ATCCC 6352 / Serotype A</strain>
    </source>
</reference>
<reference key="2">
    <citation type="journal article" date="2005" name="Science">
        <title>The genome of the basidiomycetous yeast and human pathogen Cryptococcus neoformans.</title>
        <authorList>
            <person name="Loftus B.J."/>
            <person name="Fung E."/>
            <person name="Roncaglia P."/>
            <person name="Rowley D."/>
            <person name="Amedeo P."/>
            <person name="Bruno D."/>
            <person name="Vamathevan J."/>
            <person name="Miranda M."/>
            <person name="Anderson I.J."/>
            <person name="Fraser J.A."/>
            <person name="Allen J.E."/>
            <person name="Bosdet I.E."/>
            <person name="Brent M.R."/>
            <person name="Chiu R."/>
            <person name="Doering T.L."/>
            <person name="Donlin M.J."/>
            <person name="D'Souza C.A."/>
            <person name="Fox D.S."/>
            <person name="Grinberg V."/>
            <person name="Fu J."/>
            <person name="Fukushima M."/>
            <person name="Haas B.J."/>
            <person name="Huang J.C."/>
            <person name="Janbon G."/>
            <person name="Jones S.J.M."/>
            <person name="Koo H.L."/>
            <person name="Krzywinski M.I."/>
            <person name="Kwon-Chung K.J."/>
            <person name="Lengeler K.B."/>
            <person name="Maiti R."/>
            <person name="Marra M.A."/>
            <person name="Marra R.E."/>
            <person name="Mathewson C.A."/>
            <person name="Mitchell T.G."/>
            <person name="Pertea M."/>
            <person name="Riggs F.R."/>
            <person name="Salzberg S.L."/>
            <person name="Schein J.E."/>
            <person name="Shvartsbeyn A."/>
            <person name="Shin H."/>
            <person name="Shumway M."/>
            <person name="Specht C.A."/>
            <person name="Suh B.B."/>
            <person name="Tenney A."/>
            <person name="Utterback T.R."/>
            <person name="Wickes B.L."/>
            <person name="Wortman J.R."/>
            <person name="Wye N.H."/>
            <person name="Kronstad J.W."/>
            <person name="Lodge J.K."/>
            <person name="Heitman J."/>
            <person name="Davis R.W."/>
            <person name="Fraser C.M."/>
            <person name="Hyman R.W."/>
        </authorList>
    </citation>
    <scope>NUCLEOTIDE SEQUENCE [LARGE SCALE GENOMIC DNA]</scope>
    <source>
        <strain>JEC21 / ATCC MYA-565</strain>
    </source>
</reference>
<organism>
    <name type="scientific">Cryptococcus neoformans var. neoformans serotype D (strain JEC21 / ATCC MYA-565)</name>
    <name type="common">Filobasidiella neoformans</name>
    <dbReference type="NCBI Taxonomy" id="214684"/>
    <lineage>
        <taxon>Eukaryota</taxon>
        <taxon>Fungi</taxon>
        <taxon>Dikarya</taxon>
        <taxon>Basidiomycota</taxon>
        <taxon>Agaricomycotina</taxon>
        <taxon>Tremellomycetes</taxon>
        <taxon>Tremellales</taxon>
        <taxon>Cryptococcaceae</taxon>
        <taxon>Cryptococcus</taxon>
        <taxon>Cryptococcus neoformans species complex</taxon>
    </lineage>
</organism>
<sequence>MQIFVKTLTGKTITLEVESSDTIDNVKSKIQDKEGIPPDQQRLIFAGKQLEDGRTLSDYNIQKESTLHLVLRLRGGIIEPSLKALASKYNCEKQICRKCYARLPPRATNCRKRKCGHSSQIRPKKALKK</sequence>
<proteinExistence type="evidence at protein level"/>
<gene>
    <name type="primary">UBI1</name>
    <name type="ordered locus">CNA03330</name>
</gene>
<accession>P40909</accession>
<accession>P04838</accession>
<accession>P61863</accession>
<accession>Q5KPC3</accession>
<name>RL40_CRYNJ</name>
<protein>
    <recommendedName>
        <fullName evidence="4">Ubiquitin-ribosomal protein eL40 fusion protein</fullName>
    </recommendedName>
    <component>
        <recommendedName>
            <fullName>Ubiquitin</fullName>
        </recommendedName>
    </component>
    <component>
        <recommendedName>
            <fullName evidence="4">Large ribosomal subunit protein eL40</fullName>
        </recommendedName>
        <alternativeName>
            <fullName>60S ribosomal protein L40</fullName>
        </alternativeName>
        <alternativeName>
            <fullName>CEP52</fullName>
        </alternativeName>
        <alternativeName>
            <fullName>CEP53</fullName>
        </alternativeName>
    </component>
</protein>
<keyword id="KW-0963">Cytoplasm</keyword>
<keyword id="KW-1017">Isopeptide bond</keyword>
<keyword id="KW-0539">Nucleus</keyword>
<keyword id="KW-1185">Reference proteome</keyword>
<keyword id="KW-0687">Ribonucleoprotein</keyword>
<keyword id="KW-0689">Ribosomal protein</keyword>
<keyword id="KW-0832">Ubl conjugation</keyword>
<evidence type="ECO:0000250" key="1"/>
<evidence type="ECO:0000255" key="2"/>
<evidence type="ECO:0000255" key="3">
    <source>
        <dbReference type="PROSITE-ProRule" id="PRU00214"/>
    </source>
</evidence>
<evidence type="ECO:0000305" key="4"/>
<dbReference type="EMBL" id="U16992">
    <property type="protein sequence ID" value="AAA82979.1"/>
    <property type="molecule type" value="Genomic_DNA"/>
</dbReference>
<dbReference type="EMBL" id="AE017341">
    <property type="protein sequence ID" value="AAW40841.1"/>
    <property type="molecule type" value="Genomic_DNA"/>
</dbReference>
<dbReference type="RefSeq" id="XP_566660.1">
    <property type="nucleotide sequence ID" value="XM_566660.1"/>
</dbReference>
<dbReference type="SMR" id="P40909"/>
<dbReference type="FunCoup" id="P40909">
    <property type="interactions" value="553"/>
</dbReference>
<dbReference type="STRING" id="214684.P40909"/>
<dbReference type="PaxDb" id="214684-P40909"/>
<dbReference type="EnsemblFungi" id="AAW40841">
    <property type="protein sequence ID" value="AAW40841"/>
    <property type="gene ID" value="CNA03330"/>
</dbReference>
<dbReference type="GeneID" id="3254022"/>
<dbReference type="KEGG" id="cne:CNA03330"/>
<dbReference type="VEuPathDB" id="FungiDB:CNA03330"/>
<dbReference type="eggNOG" id="KOG0003">
    <property type="taxonomic scope" value="Eukaryota"/>
</dbReference>
<dbReference type="HOGENOM" id="CLU_010412_3_4_1"/>
<dbReference type="InParanoid" id="P40909"/>
<dbReference type="OMA" id="CGRCSQL"/>
<dbReference type="OrthoDB" id="428577at2759"/>
<dbReference type="Proteomes" id="UP000002149">
    <property type="component" value="Chromosome 1"/>
</dbReference>
<dbReference type="GO" id="GO:0005737">
    <property type="term" value="C:cytoplasm"/>
    <property type="evidence" value="ECO:0000318"/>
    <property type="project" value="GO_Central"/>
</dbReference>
<dbReference type="GO" id="GO:0005634">
    <property type="term" value="C:nucleus"/>
    <property type="evidence" value="ECO:0000318"/>
    <property type="project" value="GO_Central"/>
</dbReference>
<dbReference type="GO" id="GO:1990904">
    <property type="term" value="C:ribonucleoprotein complex"/>
    <property type="evidence" value="ECO:0007669"/>
    <property type="project" value="UniProtKB-KW"/>
</dbReference>
<dbReference type="GO" id="GO:0005840">
    <property type="term" value="C:ribosome"/>
    <property type="evidence" value="ECO:0007669"/>
    <property type="project" value="UniProtKB-KW"/>
</dbReference>
<dbReference type="GO" id="GO:0031386">
    <property type="term" value="F:protein tag activity"/>
    <property type="evidence" value="ECO:0000318"/>
    <property type="project" value="GO_Central"/>
</dbReference>
<dbReference type="GO" id="GO:0003735">
    <property type="term" value="F:structural constituent of ribosome"/>
    <property type="evidence" value="ECO:0007669"/>
    <property type="project" value="InterPro"/>
</dbReference>
<dbReference type="GO" id="GO:0031625">
    <property type="term" value="F:ubiquitin protein ligase binding"/>
    <property type="evidence" value="ECO:0000318"/>
    <property type="project" value="GO_Central"/>
</dbReference>
<dbReference type="GO" id="GO:0019941">
    <property type="term" value="P:modification-dependent protein catabolic process"/>
    <property type="evidence" value="ECO:0000318"/>
    <property type="project" value="GO_Central"/>
</dbReference>
<dbReference type="GO" id="GO:0016567">
    <property type="term" value="P:protein ubiquitination"/>
    <property type="evidence" value="ECO:0000318"/>
    <property type="project" value="GO_Central"/>
</dbReference>
<dbReference type="GO" id="GO:0006412">
    <property type="term" value="P:translation"/>
    <property type="evidence" value="ECO:0007669"/>
    <property type="project" value="InterPro"/>
</dbReference>
<dbReference type="CDD" id="cd01803">
    <property type="entry name" value="Ubl_ubiquitin"/>
    <property type="match status" value="1"/>
</dbReference>
<dbReference type="FunFam" id="3.10.20.90:FF:000014">
    <property type="entry name" value="Ubiquitin-60S ribosomal L40 fusion"/>
    <property type="match status" value="1"/>
</dbReference>
<dbReference type="FunFam" id="4.10.1060.50:FF:000001">
    <property type="entry name" value="ubiquitin-60S ribosomal protein L40"/>
    <property type="match status" value="1"/>
</dbReference>
<dbReference type="Gene3D" id="4.10.1060.50">
    <property type="match status" value="1"/>
</dbReference>
<dbReference type="Gene3D" id="3.10.20.90">
    <property type="entry name" value="Phosphatidylinositol 3-kinase Catalytic Subunit, Chain A, domain 1"/>
    <property type="match status" value="1"/>
</dbReference>
<dbReference type="InterPro" id="IPR001975">
    <property type="entry name" value="Ribosomal_eL40_dom"/>
</dbReference>
<dbReference type="InterPro" id="IPR038587">
    <property type="entry name" value="Ribosomal_eL40_sf"/>
</dbReference>
<dbReference type="InterPro" id="IPR000626">
    <property type="entry name" value="Ubiquitin-like_dom"/>
</dbReference>
<dbReference type="InterPro" id="IPR029071">
    <property type="entry name" value="Ubiquitin-like_domsf"/>
</dbReference>
<dbReference type="InterPro" id="IPR019954">
    <property type="entry name" value="Ubiquitin_CS"/>
</dbReference>
<dbReference type="InterPro" id="IPR019956">
    <property type="entry name" value="Ubiquitin_dom"/>
</dbReference>
<dbReference type="InterPro" id="IPR050158">
    <property type="entry name" value="Ubiquitin_ubiquitin-like"/>
</dbReference>
<dbReference type="PANTHER" id="PTHR10666">
    <property type="entry name" value="UBIQUITIN"/>
    <property type="match status" value="1"/>
</dbReference>
<dbReference type="Pfam" id="PF01020">
    <property type="entry name" value="Ribosomal_L40e"/>
    <property type="match status" value="1"/>
</dbReference>
<dbReference type="Pfam" id="PF00240">
    <property type="entry name" value="ubiquitin"/>
    <property type="match status" value="1"/>
</dbReference>
<dbReference type="PRINTS" id="PR00348">
    <property type="entry name" value="UBIQUITIN"/>
</dbReference>
<dbReference type="SMART" id="SM01377">
    <property type="entry name" value="Ribosomal_L40e"/>
    <property type="match status" value="1"/>
</dbReference>
<dbReference type="SMART" id="SM00213">
    <property type="entry name" value="UBQ"/>
    <property type="match status" value="1"/>
</dbReference>
<dbReference type="SUPFAM" id="SSF54236">
    <property type="entry name" value="Ubiquitin-like"/>
    <property type="match status" value="1"/>
</dbReference>
<dbReference type="PROSITE" id="PS00299">
    <property type="entry name" value="UBIQUITIN_1"/>
    <property type="match status" value="1"/>
</dbReference>
<dbReference type="PROSITE" id="PS50053">
    <property type="entry name" value="UBIQUITIN_2"/>
    <property type="match status" value="1"/>
</dbReference>
<comment type="function">
    <molecule>Ubiquitin</molecule>
    <text evidence="1">Exists either covalently attached to another protein, or free (unanchored). When covalently bound, it is conjugated to target proteins via an isopeptide bond either as a monomer (monoubiquitin), a polymer linked via different Lys residues of the ubiquitin (polyubiquitin chains) or a linear polymer linked via the initiator Met of the ubiquitin (linear polyubiquitin chains). Polyubiquitin chains, when attached to a target protein, have different functions depending on the Lys residue of the ubiquitin that is linked: Lys-6-linked may be involved in DNA repair; Lys-11-linked is involved in ERAD (endoplasmic reticulum-associated degradation) and in cell-cycle regulation; Lys-29-linked is involved in lysosomal degradation; Lys-33-linked is involved in kinase modification; Lys-48-linked is involved in protein degradation via the proteasome; Lys-63-linked is involved in endocytosis, and DNA-damage responses. Linear polymer chains formed via attachment by the initiator Met lead to cell signaling. Ubiquitin is usually conjugated to Lys residues of target proteins, however, in rare cases, conjugation to Cys or Ser residues has been observed. When polyubiquitin is free (unanchored-polyubiquitin), it also has distinct roles, such as in activation of protein kinases, and in signaling (By similarity).</text>
</comment>
<comment type="function">
    <molecule>Large ribosomal subunit protein eL40</molecule>
    <text>Component of the 60S subunit of the ribosome.</text>
</comment>
<comment type="subunit">
    <molecule>Large ribosomal subunit protein eL40</molecule>
    <text evidence="1">Part of the 60S ribosomal subunit.</text>
</comment>
<comment type="subcellular location">
    <molecule>Ubiquitin</molecule>
    <subcellularLocation>
        <location evidence="1">Cytoplasm</location>
    </subcellularLocation>
    <subcellularLocation>
        <location evidence="1">Nucleus</location>
    </subcellularLocation>
</comment>
<comment type="subcellular location">
    <molecule>Large ribosomal subunit protein eL40</molecule>
    <subcellularLocation>
        <location evidence="1">Cytoplasm</location>
    </subcellularLocation>
</comment>
<comment type="similarity">
    <text evidence="4">In the N-terminal section; belongs to the ubiquitin family.</text>
</comment>
<comment type="similarity">
    <text evidence="4">In the C-terminal section; belongs to the eukaryotic ribosomal protein eL40 family.</text>
</comment>
<feature type="chain" id="PRO_0000114855" description="Ubiquitin">
    <location>
        <begin position="1"/>
        <end position="76"/>
    </location>
</feature>
<feature type="chain" id="PRO_0000138773" description="Large ribosomal subunit protein eL40">
    <location>
        <begin position="77"/>
        <end position="129"/>
    </location>
</feature>
<feature type="domain" description="Ubiquitin-like" evidence="3">
    <location>
        <begin position="1"/>
        <end position="76"/>
    </location>
</feature>
<feature type="cross-link" description="Glycyl lysine isopeptide (Lys-Gly) (interchain with G-Cter in ubiquitin)">
    <location>
        <position position="6"/>
    </location>
</feature>
<feature type="cross-link" description="Glycyl lysine isopeptide (Lys-Gly) (interchain with G-Cter in ubiquitin)">
    <location>
        <position position="11"/>
    </location>
</feature>
<feature type="cross-link" description="Glycyl lysine isopeptide (Lys-Gly) (interchain with G-Cter in ubiquitin)">
    <location>
        <position position="27"/>
    </location>
</feature>
<feature type="cross-link" description="Glycyl lysine isopeptide (Lys-Gly) (interchain with G-Cter in ubiquitin)" evidence="2">
    <location>
        <position position="29"/>
    </location>
</feature>
<feature type="cross-link" description="Glycyl lysine isopeptide (Lys-Gly) (interchain with G-Cter in ubiquitin)">
    <location>
        <position position="33"/>
    </location>
</feature>
<feature type="cross-link" description="Glycyl lysine isopeptide (Lys-Gly) (interchain with G-Cter in ubiquitin)" evidence="1">
    <location>
        <position position="48"/>
    </location>
</feature>
<feature type="cross-link" description="Glycyl lysine isopeptide (Lys-Gly) (interchain with G-Cter in ubiquitin)" evidence="2">
    <location>
        <position position="63"/>
    </location>
</feature>
<feature type="cross-link" description="Glycyl lysine isopeptide (Gly-Lys) (interchain with K-? in acceptor proteins)" evidence="3">
    <location>
        <position position="76"/>
    </location>
</feature>